<feature type="chain" id="PRO_0000057640" description="UPF0282 protein SSO3251">
    <location>
        <begin position="1"/>
        <end position="308"/>
    </location>
</feature>
<gene>
    <name type="ordered locus">SSO3251</name>
</gene>
<keyword id="KW-1185">Reference proteome</keyword>
<name>Y3251_SACS2</name>
<proteinExistence type="inferred from homology"/>
<sequence>MKITPIAFESLGVRSQATLIETKDLRVLVDPAVSLAPRRYNLPPHQREVDRLTQLAKVLVDVAKDVDVIVVSHYHYDHHDPGYVIPTDIYKNKIVFLKDPQNMINNSQKYRRAPRFLRSIKDKPRKIEIADGKTFEFNTTTISFSPAVPHGADERLGYVIQVAISDKDSTVIFTSDIEGAPKDVHLKFTKEKMPTVIIIDGPLSYLLGRALKEEELENSIRNMEEIIKNGLETVIIDHHVLRDINYAQVLKPVHDIAKDLGVRVTTAAEYLNLEPLILEARRKELYKEDNRPAKIPRGLANLLNAGDG</sequence>
<evidence type="ECO:0000255" key="1">
    <source>
        <dbReference type="HAMAP-Rule" id="MF_01406"/>
    </source>
</evidence>
<protein>
    <recommendedName>
        <fullName evidence="1">UPF0282 protein SSO3251</fullName>
    </recommendedName>
</protein>
<reference key="1">
    <citation type="journal article" date="2001" name="Proc. Natl. Acad. Sci. U.S.A.">
        <title>The complete genome of the crenarchaeon Sulfolobus solfataricus P2.</title>
        <authorList>
            <person name="She Q."/>
            <person name="Singh R.K."/>
            <person name="Confalonieri F."/>
            <person name="Zivanovic Y."/>
            <person name="Allard G."/>
            <person name="Awayez M.J."/>
            <person name="Chan-Weiher C.C.-Y."/>
            <person name="Clausen I.G."/>
            <person name="Curtis B.A."/>
            <person name="De Moors A."/>
            <person name="Erauso G."/>
            <person name="Fletcher C."/>
            <person name="Gordon P.M.K."/>
            <person name="Heikamp-de Jong I."/>
            <person name="Jeffries A.C."/>
            <person name="Kozera C.J."/>
            <person name="Medina N."/>
            <person name="Peng X."/>
            <person name="Thi-Ngoc H.P."/>
            <person name="Redder P."/>
            <person name="Schenk M.E."/>
            <person name="Theriault C."/>
            <person name="Tolstrup N."/>
            <person name="Charlebois R.L."/>
            <person name="Doolittle W.F."/>
            <person name="Duguet M."/>
            <person name="Gaasterland T."/>
            <person name="Garrett R.A."/>
            <person name="Ragan M.A."/>
            <person name="Sensen C.W."/>
            <person name="Van der Oost J."/>
        </authorList>
    </citation>
    <scope>NUCLEOTIDE SEQUENCE [LARGE SCALE GENOMIC DNA]</scope>
    <source>
        <strain>ATCC 35092 / DSM 1617 / JCM 11322 / P2</strain>
    </source>
</reference>
<accession>Q97TY2</accession>
<organism>
    <name type="scientific">Saccharolobus solfataricus (strain ATCC 35092 / DSM 1617 / JCM 11322 / P2)</name>
    <name type="common">Sulfolobus solfataricus</name>
    <dbReference type="NCBI Taxonomy" id="273057"/>
    <lineage>
        <taxon>Archaea</taxon>
        <taxon>Thermoproteota</taxon>
        <taxon>Thermoprotei</taxon>
        <taxon>Sulfolobales</taxon>
        <taxon>Sulfolobaceae</taxon>
        <taxon>Saccharolobus</taxon>
    </lineage>
</organism>
<comment type="similarity">
    <text evidence="1">Belongs to the UPF0282 family.</text>
</comment>
<dbReference type="EMBL" id="AE006641">
    <property type="protein sequence ID" value="AAK43344.1"/>
    <property type="molecule type" value="Genomic_DNA"/>
</dbReference>
<dbReference type="PIR" id="G90510">
    <property type="entry name" value="G90510"/>
</dbReference>
<dbReference type="RefSeq" id="WP_009989655.1">
    <property type="nucleotide sequence ID" value="NC_002754.1"/>
</dbReference>
<dbReference type="STRING" id="273057.SSO3251"/>
<dbReference type="PaxDb" id="273057-SSO3251"/>
<dbReference type="EnsemblBacteria" id="AAK43344">
    <property type="protein sequence ID" value="AAK43344"/>
    <property type="gene ID" value="SSO3251"/>
</dbReference>
<dbReference type="KEGG" id="sso:SSO3251"/>
<dbReference type="PATRIC" id="fig|273057.12.peg.3349"/>
<dbReference type="eggNOG" id="arCOG00969">
    <property type="taxonomic scope" value="Archaea"/>
</dbReference>
<dbReference type="HOGENOM" id="CLU_079268_0_0_2"/>
<dbReference type="InParanoid" id="Q97TY2"/>
<dbReference type="PhylomeDB" id="Q97TY2"/>
<dbReference type="Proteomes" id="UP000001974">
    <property type="component" value="Chromosome"/>
</dbReference>
<dbReference type="GO" id="GO:0016787">
    <property type="term" value="F:hydrolase activity"/>
    <property type="evidence" value="ECO:0000318"/>
    <property type="project" value="GO_Central"/>
</dbReference>
<dbReference type="Gene3D" id="3.60.15.10">
    <property type="entry name" value="Ribonuclease Z/Hydroxyacylglutathione hydrolase-like"/>
    <property type="match status" value="1"/>
</dbReference>
<dbReference type="HAMAP" id="MF_01406">
    <property type="entry name" value="UPF0282"/>
    <property type="match status" value="1"/>
</dbReference>
<dbReference type="InterPro" id="IPR001279">
    <property type="entry name" value="Metallo-B-lactamas"/>
</dbReference>
<dbReference type="InterPro" id="IPR036866">
    <property type="entry name" value="RibonucZ/Hydroxyglut_hydro"/>
</dbReference>
<dbReference type="InterPro" id="IPR050114">
    <property type="entry name" value="UPF0173_UPF0282_UlaG_hydrolase"/>
</dbReference>
<dbReference type="InterPro" id="IPR014426">
    <property type="entry name" value="UPF0282_hydrls"/>
</dbReference>
<dbReference type="NCBIfam" id="NF003287">
    <property type="entry name" value="PRK04286.1-1"/>
    <property type="match status" value="1"/>
</dbReference>
<dbReference type="PANTHER" id="PTHR43546">
    <property type="entry name" value="UPF0173 METAL-DEPENDENT HYDROLASE MJ1163-RELATED"/>
    <property type="match status" value="1"/>
</dbReference>
<dbReference type="PANTHER" id="PTHR43546:SF4">
    <property type="entry name" value="UPF0282 PROTEIN MJ1629"/>
    <property type="match status" value="1"/>
</dbReference>
<dbReference type="Pfam" id="PF12706">
    <property type="entry name" value="Lactamase_B_2"/>
    <property type="match status" value="1"/>
</dbReference>
<dbReference type="PIRSF" id="PIRSF004944">
    <property type="entry name" value="UCP004944_hydrls"/>
    <property type="match status" value="1"/>
</dbReference>
<dbReference type="SMART" id="SM00849">
    <property type="entry name" value="Lactamase_B"/>
    <property type="match status" value="1"/>
</dbReference>
<dbReference type="SUPFAM" id="SSF56281">
    <property type="entry name" value="Metallo-hydrolase/oxidoreductase"/>
    <property type="match status" value="1"/>
</dbReference>